<sequence>MSRVGKKIIDIPSDVTVTFDGNHVTVKGPKGELSRTLNERMTFKQEENTIEVVRPSDSKEDRTNHGTTRALLNNMVQGVSQGYVKVLELVGVGYRAQMQGKDLILNVGYSHPVEIKAEENITFSVEKNTVVKVEGISKEQVGALASNIRSVRPPEPYKGKGIRYQGEYVRRKEGKTGK</sequence>
<evidence type="ECO:0000255" key="1">
    <source>
        <dbReference type="HAMAP-Rule" id="MF_01365"/>
    </source>
</evidence>
<evidence type="ECO:0000305" key="2"/>
<accession>Q7A466</accession>
<name>RL6_STAAN</name>
<organism>
    <name type="scientific">Staphylococcus aureus (strain N315)</name>
    <dbReference type="NCBI Taxonomy" id="158879"/>
    <lineage>
        <taxon>Bacteria</taxon>
        <taxon>Bacillati</taxon>
        <taxon>Bacillota</taxon>
        <taxon>Bacilli</taxon>
        <taxon>Bacillales</taxon>
        <taxon>Staphylococcaceae</taxon>
        <taxon>Staphylococcus</taxon>
    </lineage>
</organism>
<proteinExistence type="evidence at protein level"/>
<protein>
    <recommendedName>
        <fullName evidence="1">Large ribosomal subunit protein uL6</fullName>
    </recommendedName>
    <alternativeName>
        <fullName evidence="2">50S ribosomal protein L6</fullName>
    </alternativeName>
</protein>
<reference key="1">
    <citation type="journal article" date="2001" name="Lancet">
        <title>Whole genome sequencing of meticillin-resistant Staphylococcus aureus.</title>
        <authorList>
            <person name="Kuroda M."/>
            <person name="Ohta T."/>
            <person name="Uchiyama I."/>
            <person name="Baba T."/>
            <person name="Yuzawa H."/>
            <person name="Kobayashi I."/>
            <person name="Cui L."/>
            <person name="Oguchi A."/>
            <person name="Aoki K."/>
            <person name="Nagai Y."/>
            <person name="Lian J.-Q."/>
            <person name="Ito T."/>
            <person name="Kanamori M."/>
            <person name="Matsumaru H."/>
            <person name="Maruyama A."/>
            <person name="Murakami H."/>
            <person name="Hosoyama A."/>
            <person name="Mizutani-Ui Y."/>
            <person name="Takahashi N.K."/>
            <person name="Sawano T."/>
            <person name="Inoue R."/>
            <person name="Kaito C."/>
            <person name="Sekimizu K."/>
            <person name="Hirakawa H."/>
            <person name="Kuhara S."/>
            <person name="Goto S."/>
            <person name="Yabuzaki J."/>
            <person name="Kanehisa M."/>
            <person name="Yamashita A."/>
            <person name="Oshima K."/>
            <person name="Furuya K."/>
            <person name="Yoshino C."/>
            <person name="Shiba T."/>
            <person name="Hattori M."/>
            <person name="Ogasawara N."/>
            <person name="Hayashi H."/>
            <person name="Hiramatsu K."/>
        </authorList>
    </citation>
    <scope>NUCLEOTIDE SEQUENCE [LARGE SCALE GENOMIC DNA]</scope>
    <source>
        <strain>N315</strain>
    </source>
</reference>
<reference key="2">
    <citation type="submission" date="2005-11" db="UniProtKB">
        <title>Shotgun proteomic analysis of total protein extract of S. aureus S30 versus N315.</title>
        <authorList>
            <person name="Stenz L."/>
        </authorList>
    </citation>
    <scope>IDENTIFICATION BY MASS SPECTROMETRY</scope>
</reference>
<reference key="3">
    <citation type="submission" date="2007-10" db="UniProtKB">
        <title>Shotgun proteomic analysis of total and membrane protein extracts of S. aureus strain N315.</title>
        <authorList>
            <person name="Vaezzadeh A.R."/>
            <person name="Deshusses J."/>
            <person name="Lescuyer P."/>
            <person name="Hochstrasser D.F."/>
        </authorList>
    </citation>
    <scope>IDENTIFICATION BY MASS SPECTROMETRY [LARGE SCALE ANALYSIS]</scope>
    <source>
        <strain>N315</strain>
    </source>
</reference>
<gene>
    <name evidence="1" type="primary">rplF</name>
    <name type="ordered locus">SA2033</name>
</gene>
<comment type="function">
    <text evidence="1">This protein binds to the 23S rRNA, and is important in its secondary structure. It is located near the subunit interface in the base of the L7/L12 stalk, and near the tRNA binding site of the peptidyltransferase center.</text>
</comment>
<comment type="subunit">
    <text evidence="1">Part of the 50S ribosomal subunit.</text>
</comment>
<comment type="similarity">
    <text evidence="1">Belongs to the universal ribosomal protein uL6 family.</text>
</comment>
<dbReference type="EMBL" id="BA000018">
    <property type="protein sequence ID" value="BAB43327.1"/>
    <property type="molecule type" value="Genomic_DNA"/>
</dbReference>
<dbReference type="PIR" id="F90020">
    <property type="entry name" value="F90020"/>
</dbReference>
<dbReference type="RefSeq" id="WP_000091975.1">
    <property type="nucleotide sequence ID" value="NC_002745.2"/>
</dbReference>
<dbReference type="SMR" id="Q7A466"/>
<dbReference type="EnsemblBacteria" id="BAB43327">
    <property type="protein sequence ID" value="BAB43327"/>
    <property type="gene ID" value="BAB43327"/>
</dbReference>
<dbReference type="KEGG" id="sau:SA2033"/>
<dbReference type="HOGENOM" id="CLU_065464_1_2_9"/>
<dbReference type="GO" id="GO:0022625">
    <property type="term" value="C:cytosolic large ribosomal subunit"/>
    <property type="evidence" value="ECO:0007669"/>
    <property type="project" value="TreeGrafter"/>
</dbReference>
<dbReference type="GO" id="GO:0019843">
    <property type="term" value="F:rRNA binding"/>
    <property type="evidence" value="ECO:0007669"/>
    <property type="project" value="UniProtKB-UniRule"/>
</dbReference>
<dbReference type="GO" id="GO:0003735">
    <property type="term" value="F:structural constituent of ribosome"/>
    <property type="evidence" value="ECO:0007669"/>
    <property type="project" value="InterPro"/>
</dbReference>
<dbReference type="GO" id="GO:0002181">
    <property type="term" value="P:cytoplasmic translation"/>
    <property type="evidence" value="ECO:0007669"/>
    <property type="project" value="TreeGrafter"/>
</dbReference>
<dbReference type="FunFam" id="3.90.930.12:FF:000001">
    <property type="entry name" value="50S ribosomal protein L6"/>
    <property type="match status" value="1"/>
</dbReference>
<dbReference type="FunFam" id="3.90.930.12:FF:000002">
    <property type="entry name" value="50S ribosomal protein L6"/>
    <property type="match status" value="1"/>
</dbReference>
<dbReference type="Gene3D" id="3.90.930.12">
    <property type="entry name" value="Ribosomal protein L6, alpha-beta domain"/>
    <property type="match status" value="2"/>
</dbReference>
<dbReference type="HAMAP" id="MF_01365_B">
    <property type="entry name" value="Ribosomal_uL6_B"/>
    <property type="match status" value="1"/>
</dbReference>
<dbReference type="InterPro" id="IPR000702">
    <property type="entry name" value="Ribosomal_uL6-like"/>
</dbReference>
<dbReference type="InterPro" id="IPR036789">
    <property type="entry name" value="Ribosomal_uL6-like_a/b-dom_sf"/>
</dbReference>
<dbReference type="InterPro" id="IPR020040">
    <property type="entry name" value="Ribosomal_uL6_a/b-dom"/>
</dbReference>
<dbReference type="InterPro" id="IPR019906">
    <property type="entry name" value="Ribosomal_uL6_bac-type"/>
</dbReference>
<dbReference type="InterPro" id="IPR002358">
    <property type="entry name" value="Ribosomal_uL6_CS"/>
</dbReference>
<dbReference type="NCBIfam" id="TIGR03654">
    <property type="entry name" value="L6_bact"/>
    <property type="match status" value="1"/>
</dbReference>
<dbReference type="PANTHER" id="PTHR11655">
    <property type="entry name" value="60S/50S RIBOSOMAL PROTEIN L6/L9"/>
    <property type="match status" value="1"/>
</dbReference>
<dbReference type="PANTHER" id="PTHR11655:SF14">
    <property type="entry name" value="LARGE RIBOSOMAL SUBUNIT PROTEIN UL6M"/>
    <property type="match status" value="1"/>
</dbReference>
<dbReference type="Pfam" id="PF00347">
    <property type="entry name" value="Ribosomal_L6"/>
    <property type="match status" value="2"/>
</dbReference>
<dbReference type="PIRSF" id="PIRSF002162">
    <property type="entry name" value="Ribosomal_L6"/>
    <property type="match status" value="1"/>
</dbReference>
<dbReference type="PRINTS" id="PR00059">
    <property type="entry name" value="RIBOSOMALL6"/>
</dbReference>
<dbReference type="SUPFAM" id="SSF56053">
    <property type="entry name" value="Ribosomal protein L6"/>
    <property type="match status" value="2"/>
</dbReference>
<dbReference type="PROSITE" id="PS00525">
    <property type="entry name" value="RIBOSOMAL_L6_1"/>
    <property type="match status" value="1"/>
</dbReference>
<keyword id="KW-0687">Ribonucleoprotein</keyword>
<keyword id="KW-0689">Ribosomal protein</keyword>
<keyword id="KW-0694">RNA-binding</keyword>
<keyword id="KW-0699">rRNA-binding</keyword>
<feature type="chain" id="PRO_0000223986" description="Large ribosomal subunit protein uL6">
    <location>
        <begin position="1"/>
        <end position="178"/>
    </location>
</feature>